<reference key="1">
    <citation type="journal article" date="2007" name="PLoS Genet.">
        <title>Meningococcal genetic variation mechanisms viewed through comparative analysis of serogroup C strain FAM18.</title>
        <authorList>
            <person name="Bentley S.D."/>
            <person name="Vernikos G.S."/>
            <person name="Snyder L.A.S."/>
            <person name="Churcher C."/>
            <person name="Arrowsmith C."/>
            <person name="Chillingworth T."/>
            <person name="Cronin A."/>
            <person name="Davis P.H."/>
            <person name="Holroyd N.E."/>
            <person name="Jagels K."/>
            <person name="Maddison M."/>
            <person name="Moule S."/>
            <person name="Rabbinowitsch E."/>
            <person name="Sharp S."/>
            <person name="Unwin L."/>
            <person name="Whitehead S."/>
            <person name="Quail M.A."/>
            <person name="Achtman M."/>
            <person name="Barrell B.G."/>
            <person name="Saunders N.J."/>
            <person name="Parkhill J."/>
        </authorList>
    </citation>
    <scope>NUCLEOTIDE SEQUENCE [LARGE SCALE GENOMIC DNA]</scope>
    <source>
        <strain>ATCC 700532 / DSM 15464 / FAM18</strain>
    </source>
</reference>
<name>BIOB_NEIMF</name>
<protein>
    <recommendedName>
        <fullName evidence="1">Biotin synthase</fullName>
        <ecNumber evidence="1">2.8.1.6</ecNumber>
    </recommendedName>
</protein>
<dbReference type="EC" id="2.8.1.6" evidence="1"/>
<dbReference type="EMBL" id="AM421808">
    <property type="protein sequence ID" value="CAM10342.1"/>
    <property type="status" value="ALT_INIT"/>
    <property type="molecule type" value="Genomic_DNA"/>
</dbReference>
<dbReference type="RefSeq" id="WP_002224544.1">
    <property type="nucleotide sequence ID" value="NC_008767.1"/>
</dbReference>
<dbReference type="SMR" id="A1KU01"/>
<dbReference type="KEGG" id="nmc:NMC1087"/>
<dbReference type="HOGENOM" id="CLU_033172_1_2_4"/>
<dbReference type="UniPathway" id="UPA00078">
    <property type="reaction ID" value="UER00162"/>
</dbReference>
<dbReference type="Proteomes" id="UP000002286">
    <property type="component" value="Chromosome"/>
</dbReference>
<dbReference type="GO" id="GO:0051537">
    <property type="term" value="F:2 iron, 2 sulfur cluster binding"/>
    <property type="evidence" value="ECO:0007669"/>
    <property type="project" value="UniProtKB-KW"/>
</dbReference>
<dbReference type="GO" id="GO:0051539">
    <property type="term" value="F:4 iron, 4 sulfur cluster binding"/>
    <property type="evidence" value="ECO:0007669"/>
    <property type="project" value="UniProtKB-KW"/>
</dbReference>
<dbReference type="GO" id="GO:0004076">
    <property type="term" value="F:biotin synthase activity"/>
    <property type="evidence" value="ECO:0007669"/>
    <property type="project" value="UniProtKB-UniRule"/>
</dbReference>
<dbReference type="GO" id="GO:0005506">
    <property type="term" value="F:iron ion binding"/>
    <property type="evidence" value="ECO:0007669"/>
    <property type="project" value="UniProtKB-UniRule"/>
</dbReference>
<dbReference type="GO" id="GO:0009102">
    <property type="term" value="P:biotin biosynthetic process"/>
    <property type="evidence" value="ECO:0007669"/>
    <property type="project" value="UniProtKB-UniRule"/>
</dbReference>
<dbReference type="CDD" id="cd01335">
    <property type="entry name" value="Radical_SAM"/>
    <property type="match status" value="1"/>
</dbReference>
<dbReference type="FunFam" id="3.20.20.70:FF:000011">
    <property type="entry name" value="Biotin synthase"/>
    <property type="match status" value="1"/>
</dbReference>
<dbReference type="Gene3D" id="3.20.20.70">
    <property type="entry name" value="Aldolase class I"/>
    <property type="match status" value="1"/>
</dbReference>
<dbReference type="HAMAP" id="MF_01694">
    <property type="entry name" value="BioB"/>
    <property type="match status" value="1"/>
</dbReference>
<dbReference type="InterPro" id="IPR013785">
    <property type="entry name" value="Aldolase_TIM"/>
</dbReference>
<dbReference type="InterPro" id="IPR010722">
    <property type="entry name" value="BATS_dom"/>
</dbReference>
<dbReference type="InterPro" id="IPR002684">
    <property type="entry name" value="Biotin_synth/BioAB"/>
</dbReference>
<dbReference type="InterPro" id="IPR024177">
    <property type="entry name" value="Biotin_synthase"/>
</dbReference>
<dbReference type="InterPro" id="IPR006638">
    <property type="entry name" value="Elp3/MiaA/NifB-like_rSAM"/>
</dbReference>
<dbReference type="InterPro" id="IPR007197">
    <property type="entry name" value="rSAM"/>
</dbReference>
<dbReference type="NCBIfam" id="TIGR00433">
    <property type="entry name" value="bioB"/>
    <property type="match status" value="1"/>
</dbReference>
<dbReference type="PANTHER" id="PTHR22976">
    <property type="entry name" value="BIOTIN SYNTHASE"/>
    <property type="match status" value="1"/>
</dbReference>
<dbReference type="PANTHER" id="PTHR22976:SF2">
    <property type="entry name" value="BIOTIN SYNTHASE, MITOCHONDRIAL"/>
    <property type="match status" value="1"/>
</dbReference>
<dbReference type="Pfam" id="PF06968">
    <property type="entry name" value="BATS"/>
    <property type="match status" value="1"/>
</dbReference>
<dbReference type="Pfam" id="PF04055">
    <property type="entry name" value="Radical_SAM"/>
    <property type="match status" value="1"/>
</dbReference>
<dbReference type="PIRSF" id="PIRSF001619">
    <property type="entry name" value="Biotin_synth"/>
    <property type="match status" value="1"/>
</dbReference>
<dbReference type="SFLD" id="SFLDG01060">
    <property type="entry name" value="BATS_domain_containing"/>
    <property type="match status" value="1"/>
</dbReference>
<dbReference type="SFLD" id="SFLDF00272">
    <property type="entry name" value="biotin_synthase"/>
    <property type="match status" value="1"/>
</dbReference>
<dbReference type="SMART" id="SM00876">
    <property type="entry name" value="BATS"/>
    <property type="match status" value="1"/>
</dbReference>
<dbReference type="SMART" id="SM00729">
    <property type="entry name" value="Elp3"/>
    <property type="match status" value="1"/>
</dbReference>
<dbReference type="SUPFAM" id="SSF102114">
    <property type="entry name" value="Radical SAM enzymes"/>
    <property type="match status" value="1"/>
</dbReference>
<dbReference type="PROSITE" id="PS51918">
    <property type="entry name" value="RADICAL_SAM"/>
    <property type="match status" value="1"/>
</dbReference>
<feature type="chain" id="PRO_0000381498" description="Biotin synthase">
    <location>
        <begin position="1"/>
        <end position="350"/>
    </location>
</feature>
<feature type="domain" description="Radical SAM core" evidence="2">
    <location>
        <begin position="54"/>
        <end position="278"/>
    </location>
</feature>
<feature type="binding site" evidence="1">
    <location>
        <position position="69"/>
    </location>
    <ligand>
        <name>[4Fe-4S] cluster</name>
        <dbReference type="ChEBI" id="CHEBI:49883"/>
        <note>4Fe-4S-S-AdoMet</note>
    </ligand>
</feature>
<feature type="binding site" evidence="1">
    <location>
        <position position="73"/>
    </location>
    <ligand>
        <name>[4Fe-4S] cluster</name>
        <dbReference type="ChEBI" id="CHEBI:49883"/>
        <note>4Fe-4S-S-AdoMet</note>
    </ligand>
</feature>
<feature type="binding site" evidence="1">
    <location>
        <position position="76"/>
    </location>
    <ligand>
        <name>[4Fe-4S] cluster</name>
        <dbReference type="ChEBI" id="CHEBI:49883"/>
        <note>4Fe-4S-S-AdoMet</note>
    </ligand>
</feature>
<feature type="binding site" evidence="1">
    <location>
        <position position="113"/>
    </location>
    <ligand>
        <name>[2Fe-2S] cluster</name>
        <dbReference type="ChEBI" id="CHEBI:190135"/>
    </ligand>
</feature>
<feature type="binding site" evidence="1">
    <location>
        <position position="144"/>
    </location>
    <ligand>
        <name>[2Fe-2S] cluster</name>
        <dbReference type="ChEBI" id="CHEBI:190135"/>
    </ligand>
</feature>
<feature type="binding site" evidence="1">
    <location>
        <position position="204"/>
    </location>
    <ligand>
        <name>[2Fe-2S] cluster</name>
        <dbReference type="ChEBI" id="CHEBI:190135"/>
    </ligand>
</feature>
<feature type="binding site" evidence="1">
    <location>
        <position position="276"/>
    </location>
    <ligand>
        <name>[2Fe-2S] cluster</name>
        <dbReference type="ChEBI" id="CHEBI:190135"/>
    </ligand>
</feature>
<gene>
    <name evidence="1" type="primary">bioB</name>
    <name type="ordered locus">NMC1087</name>
</gene>
<keyword id="KW-0001">2Fe-2S</keyword>
<keyword id="KW-0004">4Fe-4S</keyword>
<keyword id="KW-0093">Biotin biosynthesis</keyword>
<keyword id="KW-0408">Iron</keyword>
<keyword id="KW-0411">Iron-sulfur</keyword>
<keyword id="KW-0479">Metal-binding</keyword>
<keyword id="KW-0949">S-adenosyl-L-methionine</keyword>
<keyword id="KW-0808">Transferase</keyword>
<accession>A1KU01</accession>
<proteinExistence type="inferred from homology"/>
<sequence length="350" mass="38797">MTVSPVALRRKTECKPHPTARYWKKCDVEALFGLPFLELVHQAAEVHRQNFNPREIQLSTLLSIKTGGCPEDCAYCPQSAHHNTNLGKEQMMDVDEIVEKAKIAKSRGASRFCMGAAWRGPKPKDVETVSAIIKAVKGLGMETCGTFGMLEEGMAEDLKEAGLDYYNHNLDTDPDRYNDIIHTRRHEDRMDTLGKVRNAGLKVCCGGIVGMNETRAERAGLIASLANLDPQPESVPINRLVKVEGTPLADAEDLDWTEFVRTIAVARITMPQSYVRLSAGRSNMPEAMQAMCFMAGANSIFYGDKLLTTGNPDEDGDRILMEKLNLYPLQFELEGEVAEVEKASGIKVDY</sequence>
<comment type="function">
    <text evidence="1">Catalyzes the conversion of dethiobiotin (DTB) to biotin by the insertion of a sulfur atom into dethiobiotin via a radical-based mechanism.</text>
</comment>
<comment type="catalytic activity">
    <reaction evidence="1">
        <text>(4R,5S)-dethiobiotin + (sulfur carrier)-SH + 2 reduced [2Fe-2S]-[ferredoxin] + 2 S-adenosyl-L-methionine = (sulfur carrier)-H + biotin + 2 5'-deoxyadenosine + 2 L-methionine + 2 oxidized [2Fe-2S]-[ferredoxin]</text>
        <dbReference type="Rhea" id="RHEA:22060"/>
        <dbReference type="Rhea" id="RHEA-COMP:10000"/>
        <dbReference type="Rhea" id="RHEA-COMP:10001"/>
        <dbReference type="Rhea" id="RHEA-COMP:14737"/>
        <dbReference type="Rhea" id="RHEA-COMP:14739"/>
        <dbReference type="ChEBI" id="CHEBI:17319"/>
        <dbReference type="ChEBI" id="CHEBI:29917"/>
        <dbReference type="ChEBI" id="CHEBI:33737"/>
        <dbReference type="ChEBI" id="CHEBI:33738"/>
        <dbReference type="ChEBI" id="CHEBI:57586"/>
        <dbReference type="ChEBI" id="CHEBI:57844"/>
        <dbReference type="ChEBI" id="CHEBI:59789"/>
        <dbReference type="ChEBI" id="CHEBI:64428"/>
        <dbReference type="ChEBI" id="CHEBI:149473"/>
        <dbReference type="EC" id="2.8.1.6"/>
    </reaction>
</comment>
<comment type="cofactor">
    <cofactor evidence="1">
        <name>[4Fe-4S] cluster</name>
        <dbReference type="ChEBI" id="CHEBI:49883"/>
    </cofactor>
    <text evidence="1">Binds 1 [4Fe-4S] cluster. The cluster is coordinated with 3 cysteines and an exchangeable S-adenosyl-L-methionine.</text>
</comment>
<comment type="cofactor">
    <cofactor evidence="1">
        <name>[2Fe-2S] cluster</name>
        <dbReference type="ChEBI" id="CHEBI:190135"/>
    </cofactor>
    <text evidence="1">Binds 1 [2Fe-2S] cluster. The cluster is coordinated with 3 cysteines and 1 arginine.</text>
</comment>
<comment type="pathway">
    <text evidence="1">Cofactor biosynthesis; biotin biosynthesis; biotin from 7,8-diaminononanoate: step 2/2.</text>
</comment>
<comment type="subunit">
    <text evidence="1">Homodimer.</text>
</comment>
<comment type="similarity">
    <text evidence="1">Belongs to the radical SAM superfamily. Biotin synthase family.</text>
</comment>
<comment type="sequence caution" evidence="3">
    <conflict type="erroneous initiation">
        <sequence resource="EMBL-CDS" id="CAM10342"/>
    </conflict>
</comment>
<organism>
    <name type="scientific">Neisseria meningitidis serogroup C / serotype 2a (strain ATCC 700532 / DSM 15464 / FAM18)</name>
    <dbReference type="NCBI Taxonomy" id="272831"/>
    <lineage>
        <taxon>Bacteria</taxon>
        <taxon>Pseudomonadati</taxon>
        <taxon>Pseudomonadota</taxon>
        <taxon>Betaproteobacteria</taxon>
        <taxon>Neisseriales</taxon>
        <taxon>Neisseriaceae</taxon>
        <taxon>Neisseria</taxon>
    </lineage>
</organism>
<evidence type="ECO:0000255" key="1">
    <source>
        <dbReference type="HAMAP-Rule" id="MF_01694"/>
    </source>
</evidence>
<evidence type="ECO:0000255" key="2">
    <source>
        <dbReference type="PROSITE-ProRule" id="PRU01266"/>
    </source>
</evidence>
<evidence type="ECO:0000305" key="3"/>